<proteinExistence type="inferred from homology"/>
<keyword id="KW-0961">Cell wall biogenesis/degradation</keyword>
<keyword id="KW-0256">Endoplasmic reticulum</keyword>
<keyword id="KW-0472">Membrane</keyword>
<keyword id="KW-0653">Protein transport</keyword>
<keyword id="KW-0812">Transmembrane</keyword>
<keyword id="KW-1133">Transmembrane helix</keyword>
<keyword id="KW-0813">Transport</keyword>
<keyword id="KW-0843">Virulence</keyword>
<feature type="chain" id="PRO_0000280578" description="Chitin synthase export chaperone">
    <location>
        <begin position="1"/>
        <end position="334"/>
    </location>
</feature>
<feature type="transmembrane region" description="Helical" evidence="2">
    <location>
        <begin position="49"/>
        <end position="69"/>
    </location>
</feature>
<feature type="transmembrane region" description="Helical" evidence="2">
    <location>
        <begin position="85"/>
        <end position="105"/>
    </location>
</feature>
<feature type="transmembrane region" description="Helical" evidence="2">
    <location>
        <begin position="123"/>
        <end position="143"/>
    </location>
</feature>
<feature type="transmembrane region" description="Helical" evidence="2">
    <location>
        <begin position="159"/>
        <end position="179"/>
    </location>
</feature>
<feature type="transmembrane region" description="Helical" evidence="2">
    <location>
        <begin position="185"/>
        <end position="205"/>
    </location>
</feature>
<feature type="transmembrane region" description="Helical" evidence="2">
    <location>
        <begin position="220"/>
        <end position="240"/>
    </location>
</feature>
<feature type="transmembrane region" description="Helical" evidence="2">
    <location>
        <begin position="244"/>
        <end position="264"/>
    </location>
</feature>
<gene>
    <name evidence="4" type="primary">chs7</name>
    <name type="ORF">FOXG_10314</name>
</gene>
<reference key="1">
    <citation type="journal article" date="2004" name="Microbiology">
        <title>Role of chitin synthase genes in Fusarium oxysporum.</title>
        <authorList>
            <person name="Martin-Udiroz M."/>
            <person name="Madrid M.P."/>
            <person name="Roncero M.I.G."/>
        </authorList>
    </citation>
    <scope>NUCLEOTIDE SEQUENCE [GENOMIC DNA]</scope>
    <scope>FUNCTION</scope>
    <scope>DISRUPTION PHENOTYPE</scope>
    <source>
        <strain>4287 / CBS 123668 / FGSC 9935 / NRRL 34936</strain>
    </source>
</reference>
<reference key="2">
    <citation type="journal article" date="2010" name="Nature">
        <title>Comparative genomics reveals mobile pathogenicity chromosomes in Fusarium.</title>
        <authorList>
            <person name="Ma L.-J."/>
            <person name="van der Does H.C."/>
            <person name="Borkovich K.A."/>
            <person name="Coleman J.J."/>
            <person name="Daboussi M.-J."/>
            <person name="Di Pietro A."/>
            <person name="Dufresne M."/>
            <person name="Freitag M."/>
            <person name="Grabherr M."/>
            <person name="Henrissat B."/>
            <person name="Houterman P.M."/>
            <person name="Kang S."/>
            <person name="Shim W.-B."/>
            <person name="Woloshuk C."/>
            <person name="Xie X."/>
            <person name="Xu J.-R."/>
            <person name="Antoniw J."/>
            <person name="Baker S.E."/>
            <person name="Bluhm B.H."/>
            <person name="Breakspear A."/>
            <person name="Brown D.W."/>
            <person name="Butchko R.A.E."/>
            <person name="Chapman S."/>
            <person name="Coulson R."/>
            <person name="Coutinho P.M."/>
            <person name="Danchin E.G.J."/>
            <person name="Diener A."/>
            <person name="Gale L.R."/>
            <person name="Gardiner D.M."/>
            <person name="Goff S."/>
            <person name="Hammond-Kosack K.E."/>
            <person name="Hilburn K."/>
            <person name="Hua-Van A."/>
            <person name="Jonkers W."/>
            <person name="Kazan K."/>
            <person name="Kodira C.D."/>
            <person name="Koehrsen M."/>
            <person name="Kumar L."/>
            <person name="Lee Y.-H."/>
            <person name="Li L."/>
            <person name="Manners J.M."/>
            <person name="Miranda-Saavedra D."/>
            <person name="Mukherjee M."/>
            <person name="Park G."/>
            <person name="Park J."/>
            <person name="Park S.-Y."/>
            <person name="Proctor R.H."/>
            <person name="Regev A."/>
            <person name="Ruiz-Roldan M.C."/>
            <person name="Sain D."/>
            <person name="Sakthikumar S."/>
            <person name="Sykes S."/>
            <person name="Schwartz D.C."/>
            <person name="Turgeon B.G."/>
            <person name="Wapinski I."/>
            <person name="Yoder O."/>
            <person name="Young S."/>
            <person name="Zeng Q."/>
            <person name="Zhou S."/>
            <person name="Galagan J."/>
            <person name="Cuomo C.A."/>
            <person name="Kistler H.C."/>
            <person name="Rep M."/>
        </authorList>
    </citation>
    <scope>NUCLEOTIDE SEQUENCE [LARGE SCALE GENOMIC DNA]</scope>
    <source>
        <strain>4287 / CBS 123668 / FGSC 9935 / NRRL 34936</strain>
    </source>
</reference>
<name>CHS7_FUSO4</name>
<sequence>MSGFGDFTSICETAPLPLCASVGPTLQATGRTGIEPECYARNIELANTIIFEGAASVMHIVALIMTVIMILHVRSKFTAVGRKEILSFFYLYMLLTAMSLIIDAGVAPPGSDPYPYFVSVQNGLSSAVITCLLINGFVGFQLYEDGTPLSVWMMRISSLAAFAISFLVSLATFKSWAGLGPTNTVGLFVVLYLLNAVQLFVYVAMQILLVTRTLQDRWPLGDIAFGIFFFVAGQVLLYAFSSKICIAISHYLDGLFLATVCNLLGVMMVYKYWDSITKEDLEFSVGTRMNNWEVKELLPEEDRRATVFSEDPYAQSSSYDLPYSPGVARYSAKY</sequence>
<protein>
    <recommendedName>
        <fullName evidence="4">Chitin synthase export chaperone</fullName>
    </recommendedName>
</protein>
<organism>
    <name type="scientific">Fusarium oxysporum f. sp. lycopersici (strain 4287 / CBS 123668 / FGSC 9935 / NRRL 34936)</name>
    <name type="common">Fusarium vascular wilt of tomato</name>
    <dbReference type="NCBI Taxonomy" id="426428"/>
    <lineage>
        <taxon>Eukaryota</taxon>
        <taxon>Fungi</taxon>
        <taxon>Dikarya</taxon>
        <taxon>Ascomycota</taxon>
        <taxon>Pezizomycotina</taxon>
        <taxon>Sordariomycetes</taxon>
        <taxon>Hypocreomycetidae</taxon>
        <taxon>Hypocreales</taxon>
        <taxon>Nectriaceae</taxon>
        <taxon>Fusarium</taxon>
        <taxon>Fusarium oxysporum species complex</taxon>
    </lineage>
</organism>
<accession>Q5YCW8</accession>
<accession>J9N553</accession>
<evidence type="ECO:0000250" key="1">
    <source>
        <dbReference type="UniProtKB" id="P38843"/>
    </source>
</evidence>
<evidence type="ECO:0000255" key="2"/>
<evidence type="ECO:0000269" key="3">
    <source>
    </source>
</evidence>
<evidence type="ECO:0000303" key="4">
    <source>
    </source>
</evidence>
<evidence type="ECO:0000305" key="5"/>
<comment type="function">
    <text evidence="1 3">Chaperone required for the export of the chitin synthase chs3 from the endoplasmic reticulum (By similarity). Plays a critical role in cell wall integrity and virulence (PubMed:15470098).</text>
</comment>
<comment type="subcellular location">
    <subcellularLocation>
        <location evidence="1">Endoplasmic reticulum membrane</location>
        <topology evidence="1">Multi-pass membrane protein</topology>
    </subcellularLocation>
</comment>
<comment type="disruption phenotype">
    <text evidence="3">Does not affect conidiation nor nuclear distribution, but leads to increased hyphal hydrophobicity and to reduced virulence on tomato plants.</text>
</comment>
<comment type="similarity">
    <text evidence="5">Belongs to the CHS7 family.</text>
</comment>
<dbReference type="EMBL" id="AY572424">
    <property type="protein sequence ID" value="AAT77184.1"/>
    <property type="molecule type" value="Genomic_DNA"/>
</dbReference>
<dbReference type="EMBL" id="AAXH01000624">
    <property type="status" value="NOT_ANNOTATED_CDS"/>
    <property type="molecule type" value="Genomic_DNA"/>
</dbReference>
<dbReference type="RefSeq" id="XP_018247921.1">
    <property type="nucleotide sequence ID" value="XM_018389614.1"/>
</dbReference>
<dbReference type="STRING" id="426428.Q5YCW8"/>
<dbReference type="EnsemblFungi" id="FOXG_10314T0">
    <property type="protein sequence ID" value="FOXG_10314P0"/>
    <property type="gene ID" value="FOXG_10314"/>
</dbReference>
<dbReference type="GeneID" id="28951802"/>
<dbReference type="KEGG" id="fox:FOXG_10314"/>
<dbReference type="VEuPathDB" id="FungiDB:FOXG_10314"/>
<dbReference type="HOGENOM" id="CLU_050424_1_1_1"/>
<dbReference type="OMA" id="TVWEVKD"/>
<dbReference type="PHI-base" id="PHI:337"/>
<dbReference type="GO" id="GO:0005789">
    <property type="term" value="C:endoplasmic reticulum membrane"/>
    <property type="evidence" value="ECO:0007669"/>
    <property type="project" value="UniProtKB-SubCell"/>
</dbReference>
<dbReference type="GO" id="GO:0051082">
    <property type="term" value="F:unfolded protein binding"/>
    <property type="evidence" value="ECO:0007669"/>
    <property type="project" value="TreeGrafter"/>
</dbReference>
<dbReference type="GO" id="GO:0071555">
    <property type="term" value="P:cell wall organization"/>
    <property type="evidence" value="ECO:0007669"/>
    <property type="project" value="UniProtKB-KW"/>
</dbReference>
<dbReference type="GO" id="GO:0006457">
    <property type="term" value="P:protein folding"/>
    <property type="evidence" value="ECO:0007669"/>
    <property type="project" value="TreeGrafter"/>
</dbReference>
<dbReference type="GO" id="GO:0015031">
    <property type="term" value="P:protein transport"/>
    <property type="evidence" value="ECO:0007669"/>
    <property type="project" value="UniProtKB-KW"/>
</dbReference>
<dbReference type="InterPro" id="IPR022057">
    <property type="entry name" value="Chs7"/>
</dbReference>
<dbReference type="PANTHER" id="PTHR35329">
    <property type="entry name" value="CHITIN SYNTHASE EXPORT CHAPERONE"/>
    <property type="match status" value="1"/>
</dbReference>
<dbReference type="PANTHER" id="PTHR35329:SF2">
    <property type="entry name" value="CHITIN SYNTHASE EXPORT CHAPERONE"/>
    <property type="match status" value="1"/>
</dbReference>
<dbReference type="Pfam" id="PF12271">
    <property type="entry name" value="Chs7"/>
    <property type="match status" value="1"/>
</dbReference>